<keyword id="KW-0067">ATP-binding</keyword>
<keyword id="KW-0143">Chaperone</keyword>
<keyword id="KW-0479">Metal-binding</keyword>
<keyword id="KW-0547">Nucleotide-binding</keyword>
<keyword id="KW-0862">Zinc</keyword>
<proteinExistence type="inferred from homology"/>
<comment type="function">
    <text evidence="1">ATP-dependent specificity component of the Clp protease. It directs the protease to specific substrates. Can perform chaperone functions in the absence of ClpP.</text>
</comment>
<comment type="subunit">
    <text evidence="1">Component of the ClpX-ClpP complex. Forms a hexameric ring that, in the presence of ATP, binds to fourteen ClpP subunits assembled into a disk-like structure with a central cavity, resembling the structure of eukaryotic proteasomes.</text>
</comment>
<comment type="similarity">
    <text evidence="1">Belongs to the ClpX chaperone family.</text>
</comment>
<dbReference type="EMBL" id="CP000390">
    <property type="protein sequence ID" value="ABG62566.1"/>
    <property type="molecule type" value="Genomic_DNA"/>
</dbReference>
<dbReference type="SMR" id="Q11J59"/>
<dbReference type="STRING" id="266779.Meso_1170"/>
<dbReference type="KEGG" id="mes:Meso_1170"/>
<dbReference type="eggNOG" id="COG1219">
    <property type="taxonomic scope" value="Bacteria"/>
</dbReference>
<dbReference type="HOGENOM" id="CLU_014218_8_2_5"/>
<dbReference type="OrthoDB" id="9804062at2"/>
<dbReference type="GO" id="GO:0009376">
    <property type="term" value="C:HslUV protease complex"/>
    <property type="evidence" value="ECO:0007669"/>
    <property type="project" value="TreeGrafter"/>
</dbReference>
<dbReference type="GO" id="GO:0005524">
    <property type="term" value="F:ATP binding"/>
    <property type="evidence" value="ECO:0007669"/>
    <property type="project" value="UniProtKB-UniRule"/>
</dbReference>
<dbReference type="GO" id="GO:0016887">
    <property type="term" value="F:ATP hydrolysis activity"/>
    <property type="evidence" value="ECO:0007669"/>
    <property type="project" value="InterPro"/>
</dbReference>
<dbReference type="GO" id="GO:0140662">
    <property type="term" value="F:ATP-dependent protein folding chaperone"/>
    <property type="evidence" value="ECO:0007669"/>
    <property type="project" value="InterPro"/>
</dbReference>
<dbReference type="GO" id="GO:0046983">
    <property type="term" value="F:protein dimerization activity"/>
    <property type="evidence" value="ECO:0007669"/>
    <property type="project" value="InterPro"/>
</dbReference>
<dbReference type="GO" id="GO:0051082">
    <property type="term" value="F:unfolded protein binding"/>
    <property type="evidence" value="ECO:0007669"/>
    <property type="project" value="UniProtKB-UniRule"/>
</dbReference>
<dbReference type="GO" id="GO:0008270">
    <property type="term" value="F:zinc ion binding"/>
    <property type="evidence" value="ECO:0007669"/>
    <property type="project" value="InterPro"/>
</dbReference>
<dbReference type="GO" id="GO:0051301">
    <property type="term" value="P:cell division"/>
    <property type="evidence" value="ECO:0007669"/>
    <property type="project" value="TreeGrafter"/>
</dbReference>
<dbReference type="GO" id="GO:0051603">
    <property type="term" value="P:proteolysis involved in protein catabolic process"/>
    <property type="evidence" value="ECO:0007669"/>
    <property type="project" value="TreeGrafter"/>
</dbReference>
<dbReference type="CDD" id="cd19497">
    <property type="entry name" value="RecA-like_ClpX"/>
    <property type="match status" value="1"/>
</dbReference>
<dbReference type="FunFam" id="1.10.8.60:FF:000002">
    <property type="entry name" value="ATP-dependent Clp protease ATP-binding subunit ClpX"/>
    <property type="match status" value="1"/>
</dbReference>
<dbReference type="FunFam" id="3.40.50.300:FF:000005">
    <property type="entry name" value="ATP-dependent Clp protease ATP-binding subunit ClpX"/>
    <property type="match status" value="1"/>
</dbReference>
<dbReference type="Gene3D" id="1.10.8.60">
    <property type="match status" value="1"/>
</dbReference>
<dbReference type="Gene3D" id="6.20.220.10">
    <property type="entry name" value="ClpX chaperone, C4-type zinc finger domain"/>
    <property type="match status" value="1"/>
</dbReference>
<dbReference type="Gene3D" id="3.40.50.300">
    <property type="entry name" value="P-loop containing nucleotide triphosphate hydrolases"/>
    <property type="match status" value="1"/>
</dbReference>
<dbReference type="HAMAP" id="MF_00175">
    <property type="entry name" value="ClpX"/>
    <property type="match status" value="1"/>
</dbReference>
<dbReference type="InterPro" id="IPR003593">
    <property type="entry name" value="AAA+_ATPase"/>
</dbReference>
<dbReference type="InterPro" id="IPR050052">
    <property type="entry name" value="ATP-dep_Clp_protease_ClpX"/>
</dbReference>
<dbReference type="InterPro" id="IPR003959">
    <property type="entry name" value="ATPase_AAA_core"/>
</dbReference>
<dbReference type="InterPro" id="IPR019489">
    <property type="entry name" value="Clp_ATPase_C"/>
</dbReference>
<dbReference type="InterPro" id="IPR004487">
    <property type="entry name" value="Clp_protease_ATP-bd_su_ClpX"/>
</dbReference>
<dbReference type="InterPro" id="IPR046425">
    <property type="entry name" value="ClpX_bact"/>
</dbReference>
<dbReference type="InterPro" id="IPR027417">
    <property type="entry name" value="P-loop_NTPase"/>
</dbReference>
<dbReference type="InterPro" id="IPR010603">
    <property type="entry name" value="Znf_CppX_C4"/>
</dbReference>
<dbReference type="InterPro" id="IPR038366">
    <property type="entry name" value="Znf_CppX_C4_sf"/>
</dbReference>
<dbReference type="NCBIfam" id="TIGR00382">
    <property type="entry name" value="clpX"/>
    <property type="match status" value="1"/>
</dbReference>
<dbReference type="NCBIfam" id="NF003745">
    <property type="entry name" value="PRK05342.1"/>
    <property type="match status" value="1"/>
</dbReference>
<dbReference type="PANTHER" id="PTHR48102:SF7">
    <property type="entry name" value="ATP-DEPENDENT CLP PROTEASE ATP-BINDING SUBUNIT CLPX-LIKE, MITOCHONDRIAL"/>
    <property type="match status" value="1"/>
</dbReference>
<dbReference type="PANTHER" id="PTHR48102">
    <property type="entry name" value="ATP-DEPENDENT CLP PROTEASE ATP-BINDING SUBUNIT CLPX-LIKE, MITOCHONDRIAL-RELATED"/>
    <property type="match status" value="1"/>
</dbReference>
<dbReference type="Pfam" id="PF07724">
    <property type="entry name" value="AAA_2"/>
    <property type="match status" value="1"/>
</dbReference>
<dbReference type="Pfam" id="PF10431">
    <property type="entry name" value="ClpB_D2-small"/>
    <property type="match status" value="1"/>
</dbReference>
<dbReference type="Pfam" id="PF06689">
    <property type="entry name" value="zf-C4_ClpX"/>
    <property type="match status" value="1"/>
</dbReference>
<dbReference type="SMART" id="SM00382">
    <property type="entry name" value="AAA"/>
    <property type="match status" value="1"/>
</dbReference>
<dbReference type="SMART" id="SM01086">
    <property type="entry name" value="ClpB_D2-small"/>
    <property type="match status" value="1"/>
</dbReference>
<dbReference type="SMART" id="SM00994">
    <property type="entry name" value="zf-C4_ClpX"/>
    <property type="match status" value="1"/>
</dbReference>
<dbReference type="SUPFAM" id="SSF57716">
    <property type="entry name" value="Glucocorticoid receptor-like (DNA-binding domain)"/>
    <property type="match status" value="1"/>
</dbReference>
<dbReference type="SUPFAM" id="SSF52540">
    <property type="entry name" value="P-loop containing nucleoside triphosphate hydrolases"/>
    <property type="match status" value="1"/>
</dbReference>
<dbReference type="PROSITE" id="PS51902">
    <property type="entry name" value="CLPX_ZB"/>
    <property type="match status" value="1"/>
</dbReference>
<evidence type="ECO:0000255" key="1">
    <source>
        <dbReference type="HAMAP-Rule" id="MF_00175"/>
    </source>
</evidence>
<evidence type="ECO:0000255" key="2">
    <source>
        <dbReference type="PROSITE-ProRule" id="PRU01250"/>
    </source>
</evidence>
<sequence>MSKISNSGGDSKNTLYCSFCGKSQHEVRKLIAGPTVFICDECVELCMDIIREENKSSMVKSREGVPTPQEIMEVLDDYVIGQTYAKRVLSVAVHNHYKRLAHAGKNADVELSKSNILLIGPTGCGKTLLAQTLARIIDVPFTMADATTLTEAGYVGEDVENIILKLLQSADYNVERAQRGIVYIDEIDKISRKSDNPSITRDVSGEGVQQALLKIMEGTVASVPPQGGRKHPQQEFLQVDTSSILFICGGAFAGLEKIISDRGKKTSIGFGASVSSPEDRRAGELLRQVEPEDLLKFGLIPEFVGRLPILATLEDLDEEALVQILTEPKNALVKQYQRLFEMENVELTFHENALRAIARKAIERKTGARGLRSIMEAILLDTMFELPALEGVQEVVISEDVVAGSARPLYIYAEREKEKGSVSA</sequence>
<organism>
    <name type="scientific">Chelativorans sp. (strain BNC1)</name>
    <dbReference type="NCBI Taxonomy" id="266779"/>
    <lineage>
        <taxon>Bacteria</taxon>
        <taxon>Pseudomonadati</taxon>
        <taxon>Pseudomonadota</taxon>
        <taxon>Alphaproteobacteria</taxon>
        <taxon>Hyphomicrobiales</taxon>
        <taxon>Phyllobacteriaceae</taxon>
        <taxon>Chelativorans</taxon>
    </lineage>
</organism>
<protein>
    <recommendedName>
        <fullName evidence="1">ATP-dependent Clp protease ATP-binding subunit ClpX</fullName>
    </recommendedName>
</protein>
<name>CLPX_CHESB</name>
<accession>Q11J59</accession>
<gene>
    <name evidence="1" type="primary">clpX</name>
    <name type="ordered locus">Meso_1170</name>
</gene>
<feature type="chain" id="PRO_1000024583" description="ATP-dependent Clp protease ATP-binding subunit ClpX">
    <location>
        <begin position="1"/>
        <end position="424"/>
    </location>
</feature>
<feature type="domain" description="ClpX-type ZB" evidence="2">
    <location>
        <begin position="5"/>
        <end position="58"/>
    </location>
</feature>
<feature type="binding site" evidence="2">
    <location>
        <position position="17"/>
    </location>
    <ligand>
        <name>Zn(2+)</name>
        <dbReference type="ChEBI" id="CHEBI:29105"/>
    </ligand>
</feature>
<feature type="binding site" evidence="2">
    <location>
        <position position="20"/>
    </location>
    <ligand>
        <name>Zn(2+)</name>
        <dbReference type="ChEBI" id="CHEBI:29105"/>
    </ligand>
</feature>
<feature type="binding site" evidence="2">
    <location>
        <position position="39"/>
    </location>
    <ligand>
        <name>Zn(2+)</name>
        <dbReference type="ChEBI" id="CHEBI:29105"/>
    </ligand>
</feature>
<feature type="binding site" evidence="2">
    <location>
        <position position="42"/>
    </location>
    <ligand>
        <name>Zn(2+)</name>
        <dbReference type="ChEBI" id="CHEBI:29105"/>
    </ligand>
</feature>
<feature type="binding site" evidence="1">
    <location>
        <begin position="121"/>
        <end position="128"/>
    </location>
    <ligand>
        <name>ATP</name>
        <dbReference type="ChEBI" id="CHEBI:30616"/>
    </ligand>
</feature>
<reference key="1">
    <citation type="submission" date="2006-06" db="EMBL/GenBank/DDBJ databases">
        <title>Complete sequence of chromosome of Mesorhizobium sp. BNC1.</title>
        <authorList>
            <consortium name="US DOE Joint Genome Institute"/>
            <person name="Copeland A."/>
            <person name="Lucas S."/>
            <person name="Lapidus A."/>
            <person name="Barry K."/>
            <person name="Detter J.C."/>
            <person name="Glavina del Rio T."/>
            <person name="Hammon N."/>
            <person name="Israni S."/>
            <person name="Dalin E."/>
            <person name="Tice H."/>
            <person name="Pitluck S."/>
            <person name="Chertkov O."/>
            <person name="Brettin T."/>
            <person name="Bruce D."/>
            <person name="Han C."/>
            <person name="Tapia R."/>
            <person name="Gilna P."/>
            <person name="Schmutz J."/>
            <person name="Larimer F."/>
            <person name="Land M."/>
            <person name="Hauser L."/>
            <person name="Kyrpides N."/>
            <person name="Mikhailova N."/>
            <person name="Richardson P."/>
        </authorList>
    </citation>
    <scope>NUCLEOTIDE SEQUENCE [LARGE SCALE GENOMIC DNA]</scope>
    <source>
        <strain>BNC1</strain>
    </source>
</reference>